<feature type="initiator methionine" description="Removed" evidence="8">
    <location>
        <position position="1"/>
    </location>
</feature>
<feature type="chain" id="PRO_0000132689" description="Small ribosomal subunit protein uS4">
    <location>
        <begin position="2"/>
        <end position="194"/>
    </location>
</feature>
<feature type="domain" description="S4 RNA-binding" evidence="2">
    <location>
        <begin position="108"/>
        <end position="182"/>
    </location>
</feature>
<feature type="region of interest" description="Disordered" evidence="3">
    <location>
        <begin position="162"/>
        <end position="194"/>
    </location>
</feature>
<feature type="modified residue" description="N6-acetyllysine" evidence="1">
    <location>
        <position position="66"/>
    </location>
</feature>
<feature type="modified residue" description="N6-acetyllysine" evidence="1">
    <location>
        <position position="116"/>
    </location>
</feature>
<feature type="modified residue" description="Phosphoserine" evidence="16">
    <location>
        <position position="153"/>
    </location>
</feature>
<feature type="modified residue" description="N6-acetyllysine" evidence="15">
    <location>
        <position position="155"/>
    </location>
</feature>
<feature type="modified residue" description="Phosphoserine" evidence="16">
    <location>
        <position position="163"/>
    </location>
</feature>
<feature type="cross-link" description="Glycyl lysine isopeptide (Lys-Gly) (interchain with G-Cter in SUMO2)" evidence="17">
    <location>
        <position position="93"/>
    </location>
</feature>
<feature type="cross-link" description="Glycyl lysine isopeptide (Lys-Gly) (interchain with G-Cter in SUMO2)" evidence="17">
    <location>
        <position position="139"/>
    </location>
</feature>
<feature type="sequence variant" id="VAR_036543" description="In a breast cancer sample; somatic mutation." evidence="4">
    <original>V</original>
    <variation>F</variation>
    <location>
        <position position="137"/>
    </location>
</feature>
<feature type="sequence conflict" description="In Ref. 1; AAA85659." evidence="10" ref="1">
    <original>I</original>
    <variation>L</variation>
    <location>
        <position position="84"/>
    </location>
</feature>
<feature type="sequence conflict" description="In Ref. 1; AAA85659." evidence="10" ref="1">
    <original>YGG</original>
    <variation>TGV</variation>
    <location>
        <begin position="165"/>
        <end position="167"/>
    </location>
</feature>
<feature type="strand" evidence="19">
    <location>
        <begin position="17"/>
        <end position="20"/>
    </location>
</feature>
<feature type="helix" evidence="20">
    <location>
        <begin position="22"/>
        <end position="35"/>
    </location>
</feature>
<feature type="helix" evidence="20">
    <location>
        <begin position="40"/>
        <end position="61"/>
    </location>
</feature>
<feature type="helix" evidence="20">
    <location>
        <begin position="68"/>
        <end position="83"/>
    </location>
</feature>
<feature type="helix" evidence="19">
    <location>
        <begin position="89"/>
        <end position="91"/>
    </location>
</feature>
<feature type="helix" evidence="20">
    <location>
        <begin position="94"/>
        <end position="97"/>
    </location>
</feature>
<feature type="helix" evidence="20">
    <location>
        <begin position="102"/>
        <end position="106"/>
    </location>
</feature>
<feature type="helix" evidence="20">
    <location>
        <begin position="110"/>
        <end position="116"/>
    </location>
</feature>
<feature type="strand" evidence="20">
    <location>
        <begin position="119"/>
        <end position="122"/>
    </location>
</feature>
<feature type="helix" evidence="20">
    <location>
        <begin position="123"/>
        <end position="131"/>
    </location>
</feature>
<feature type="strand" evidence="20">
    <location>
        <begin position="135"/>
        <end position="137"/>
    </location>
</feature>
<feature type="helix" evidence="20">
    <location>
        <begin position="151"/>
        <end position="154"/>
    </location>
</feature>
<feature type="strand" evidence="20">
    <location>
        <begin position="157"/>
        <end position="159"/>
    </location>
</feature>
<feature type="strand" evidence="18">
    <location>
        <begin position="161"/>
        <end position="163"/>
    </location>
</feature>
<feature type="strand" evidence="20">
    <location>
        <begin position="166"/>
        <end position="168"/>
    </location>
</feature>
<feature type="helix" evidence="20">
    <location>
        <begin position="172"/>
        <end position="177"/>
    </location>
</feature>
<feature type="helix" evidence="20">
    <location>
        <begin position="178"/>
        <end position="180"/>
    </location>
</feature>
<protein>
    <recommendedName>
        <fullName evidence="9">Small ribosomal subunit protein uS4</fullName>
    </recommendedName>
    <alternativeName>
        <fullName>40S ribosomal protein S9</fullName>
    </alternativeName>
</protein>
<comment type="function">
    <text evidence="6 7">Component of the small ribosomal subunit (PubMed:23636399). The ribosome is a large ribonucleoprotein complex responsible for the synthesis of proteins in the cell (PubMed:23636399). Part of the small subunit (SSU) processome, first precursor of the small eukaryotic ribosomal subunit. During the assembly of the SSU processome in the nucleolus, many ribosome biogenesis factors, an RNA chaperone and ribosomal proteins associate with the nascent pre-rRNA and work in concert to generate RNA folding, modifications, rearrangements and cleavage as well as targeted degradation of pre-ribosomal RNA by the RNA exosome (PubMed:34516797).</text>
</comment>
<comment type="subunit">
    <text evidence="5 6 7">Component of the small ribosomal subunit (PubMed:23636399). Identified in a IGF2BP1-dependent mRNP granule complex containing untranslated mRNAs (PubMed:17289661). Part of the small subunit (SSU) processome, composed of more than 70 proteins and the RNA chaperone small nucleolar RNA (snoRNA) U3 (PubMed:34516797).</text>
</comment>
<comment type="interaction">
    <interactant intactId="EBI-351206">
        <id>P46781</id>
    </interactant>
    <interactant intactId="EBI-443446">
        <id>P15880</id>
        <label>RPS2</label>
    </interactant>
    <organismsDiffer>false</organismsDiffer>
    <experiments>2</experiments>
</comment>
<comment type="interaction">
    <interactant intactId="EBI-351206">
        <id>P46781</id>
    </interactant>
    <interactant intactId="EBI-518675">
        <id>P40763</id>
        <label>STAT3</label>
    </interactant>
    <organismsDiffer>false</organismsDiffer>
    <experiments>2</experiments>
</comment>
<comment type="subcellular location">
    <subcellularLocation>
        <location evidence="5 6">Cytoplasm</location>
    </subcellularLocation>
    <subcellularLocation>
        <location evidence="7">Nucleus</location>
        <location evidence="7">Nucleolus</location>
    </subcellularLocation>
    <text evidence="5">Localized in cytoplasmic mRNP granules containing untranslated mRNAs.</text>
</comment>
<comment type="similarity">
    <text evidence="10">Belongs to the universal ribosomal protein uS4 family.</text>
</comment>
<dbReference type="EMBL" id="U14971">
    <property type="protein sequence ID" value="AAA85659.1"/>
    <property type="molecule type" value="mRNA"/>
</dbReference>
<dbReference type="EMBL" id="AB061839">
    <property type="protein sequence ID" value="BAB79477.1"/>
    <property type="molecule type" value="Genomic_DNA"/>
</dbReference>
<dbReference type="EMBL" id="CU457734">
    <property type="status" value="NOT_ANNOTATED_CDS"/>
    <property type="molecule type" value="Genomic_DNA"/>
</dbReference>
<dbReference type="EMBL" id="CU151838">
    <property type="status" value="NOT_ANNOTATED_CDS"/>
    <property type="molecule type" value="Genomic_DNA"/>
</dbReference>
<dbReference type="EMBL" id="CH471135">
    <property type="protein sequence ID" value="EAW72209.1"/>
    <property type="molecule type" value="Genomic_DNA"/>
</dbReference>
<dbReference type="EMBL" id="BC000802">
    <property type="protein sequence ID" value="AAH00802.1"/>
    <property type="molecule type" value="mRNA"/>
</dbReference>
<dbReference type="EMBL" id="BC007410">
    <property type="protein sequence ID" value="AAH07410.1"/>
    <property type="molecule type" value="mRNA"/>
</dbReference>
<dbReference type="EMBL" id="BC007434">
    <property type="protein sequence ID" value="AAH07434.1"/>
    <property type="molecule type" value="mRNA"/>
</dbReference>
<dbReference type="EMBL" id="BC007857">
    <property type="protein sequence ID" value="AAH07857.1"/>
    <property type="molecule type" value="mRNA"/>
</dbReference>
<dbReference type="EMBL" id="BC068055">
    <property type="protein sequence ID" value="AAH68055.1"/>
    <property type="molecule type" value="mRNA"/>
</dbReference>
<dbReference type="EMBL" id="BC071940">
    <property type="protein sequence ID" value="AAH71940.1"/>
    <property type="molecule type" value="mRNA"/>
</dbReference>
<dbReference type="EMBL" id="BC096756">
    <property type="protein sequence ID" value="AAH96756.1"/>
    <property type="molecule type" value="mRNA"/>
</dbReference>
<dbReference type="EMBL" id="AB007150">
    <property type="protein sequence ID" value="BAA25816.1"/>
    <property type="molecule type" value="Genomic_DNA"/>
</dbReference>
<dbReference type="CCDS" id="CCDS12884.1"/>
<dbReference type="PIR" id="S55917">
    <property type="entry name" value="S55917"/>
</dbReference>
<dbReference type="RefSeq" id="NP_001004.2">
    <property type="nucleotide sequence ID" value="NM_001013.3"/>
</dbReference>
<dbReference type="RefSeq" id="NP_001308630.1">
    <property type="nucleotide sequence ID" value="NM_001321701.2"/>
</dbReference>
<dbReference type="RefSeq" id="NP_001308631.1">
    <property type="nucleotide sequence ID" value="NM_001321702.2"/>
</dbReference>
<dbReference type="RefSeq" id="NP_001308633.1">
    <property type="nucleotide sequence ID" value="NM_001321704.2"/>
</dbReference>
<dbReference type="PDB" id="4UG0">
    <property type="method" value="EM"/>
    <property type="chains" value="SJ=1-194"/>
</dbReference>
<dbReference type="PDB" id="4V6X">
    <property type="method" value="EM"/>
    <property type="resolution" value="5.00 A"/>
    <property type="chains" value="AJ=1-194"/>
</dbReference>
<dbReference type="PDB" id="5A2Q">
    <property type="method" value="EM"/>
    <property type="resolution" value="3.90 A"/>
    <property type="chains" value="J=1-194"/>
</dbReference>
<dbReference type="PDB" id="5AJ0">
    <property type="method" value="EM"/>
    <property type="resolution" value="3.50 A"/>
    <property type="chains" value="BJ=1-194"/>
</dbReference>
<dbReference type="PDB" id="5FLX">
    <property type="method" value="EM"/>
    <property type="resolution" value="3.90 A"/>
    <property type="chains" value="J=1-194"/>
</dbReference>
<dbReference type="PDB" id="5LKS">
    <property type="method" value="EM"/>
    <property type="resolution" value="3.60 A"/>
    <property type="chains" value="SJ=1-194"/>
</dbReference>
<dbReference type="PDB" id="5OA3">
    <property type="method" value="EM"/>
    <property type="resolution" value="4.30 A"/>
    <property type="chains" value="J=1-194"/>
</dbReference>
<dbReference type="PDB" id="5T2C">
    <property type="method" value="EM"/>
    <property type="resolution" value="3.60 A"/>
    <property type="chains" value="AL=1-194"/>
</dbReference>
<dbReference type="PDB" id="5VYC">
    <property type="method" value="X-ray"/>
    <property type="resolution" value="6.00 A"/>
    <property type="chains" value="J1/J2/J3/J4/J5/J6=1-194"/>
</dbReference>
<dbReference type="PDB" id="6FEC">
    <property type="method" value="EM"/>
    <property type="resolution" value="6.30 A"/>
    <property type="chains" value="K=7-188"/>
</dbReference>
<dbReference type="PDB" id="6G18">
    <property type="method" value="EM"/>
    <property type="resolution" value="3.60 A"/>
    <property type="chains" value="J=1-194"/>
</dbReference>
<dbReference type="PDB" id="6G4S">
    <property type="method" value="EM"/>
    <property type="resolution" value="4.00 A"/>
    <property type="chains" value="J=1-194"/>
</dbReference>
<dbReference type="PDB" id="6G4W">
    <property type="method" value="EM"/>
    <property type="resolution" value="4.50 A"/>
    <property type="chains" value="J=1-194"/>
</dbReference>
<dbReference type="PDB" id="6G51">
    <property type="method" value="EM"/>
    <property type="resolution" value="4.10 A"/>
    <property type="chains" value="J=1-194"/>
</dbReference>
<dbReference type="PDB" id="6G53">
    <property type="method" value="EM"/>
    <property type="resolution" value="4.50 A"/>
    <property type="chains" value="J=1-194"/>
</dbReference>
<dbReference type="PDB" id="6G5H">
    <property type="method" value="EM"/>
    <property type="resolution" value="3.60 A"/>
    <property type="chains" value="J=1-194"/>
</dbReference>
<dbReference type="PDB" id="6G5I">
    <property type="method" value="EM"/>
    <property type="resolution" value="3.50 A"/>
    <property type="chains" value="J=1-194"/>
</dbReference>
<dbReference type="PDB" id="6IP5">
    <property type="method" value="EM"/>
    <property type="resolution" value="3.90 A"/>
    <property type="chains" value="3I=1-194"/>
</dbReference>
<dbReference type="PDB" id="6IP6">
    <property type="method" value="EM"/>
    <property type="resolution" value="4.50 A"/>
    <property type="chains" value="3I=1-194"/>
</dbReference>
<dbReference type="PDB" id="6IP8">
    <property type="method" value="EM"/>
    <property type="resolution" value="3.90 A"/>
    <property type="chains" value="3I=1-194"/>
</dbReference>
<dbReference type="PDB" id="6OLE">
    <property type="method" value="EM"/>
    <property type="resolution" value="3.10 A"/>
    <property type="chains" value="SJ=2-186"/>
</dbReference>
<dbReference type="PDB" id="6OLF">
    <property type="method" value="EM"/>
    <property type="resolution" value="3.90 A"/>
    <property type="chains" value="SJ=2-186"/>
</dbReference>
<dbReference type="PDB" id="6OLG">
    <property type="method" value="EM"/>
    <property type="resolution" value="3.40 A"/>
    <property type="chains" value="BJ=2-180"/>
</dbReference>
<dbReference type="PDB" id="6OLI">
    <property type="method" value="EM"/>
    <property type="resolution" value="3.50 A"/>
    <property type="chains" value="SJ=2-186"/>
</dbReference>
<dbReference type="PDB" id="6OLZ">
    <property type="method" value="EM"/>
    <property type="resolution" value="3.90 A"/>
    <property type="chains" value="BJ=2-180"/>
</dbReference>
<dbReference type="PDB" id="6OM0">
    <property type="method" value="EM"/>
    <property type="resolution" value="3.10 A"/>
    <property type="chains" value="SJ=2-186"/>
</dbReference>
<dbReference type="PDB" id="6OM7">
    <property type="method" value="EM"/>
    <property type="resolution" value="3.70 A"/>
    <property type="chains" value="SJ=2-186"/>
</dbReference>
<dbReference type="PDB" id="6QZP">
    <property type="method" value="EM"/>
    <property type="resolution" value="2.90 A"/>
    <property type="chains" value="SJ=2-186"/>
</dbReference>
<dbReference type="PDB" id="6XA1">
    <property type="method" value="EM"/>
    <property type="resolution" value="2.80 A"/>
    <property type="chains" value="SJ=2-181"/>
</dbReference>
<dbReference type="PDB" id="6Y0G">
    <property type="method" value="EM"/>
    <property type="resolution" value="3.20 A"/>
    <property type="chains" value="SJ=1-194"/>
</dbReference>
<dbReference type="PDB" id="6Y2L">
    <property type="method" value="EM"/>
    <property type="resolution" value="3.00 A"/>
    <property type="chains" value="SJ=1-194"/>
</dbReference>
<dbReference type="PDB" id="6Y57">
    <property type="method" value="EM"/>
    <property type="resolution" value="3.50 A"/>
    <property type="chains" value="SJ=1-194"/>
</dbReference>
<dbReference type="PDB" id="6YBW">
    <property type="method" value="EM"/>
    <property type="resolution" value="3.10 A"/>
    <property type="chains" value="D=1-194"/>
</dbReference>
<dbReference type="PDB" id="6Z6L">
    <property type="method" value="EM"/>
    <property type="resolution" value="3.00 A"/>
    <property type="chains" value="SJ=1-194"/>
</dbReference>
<dbReference type="PDB" id="6Z6M">
    <property type="method" value="EM"/>
    <property type="resolution" value="3.10 A"/>
    <property type="chains" value="SJ=1-194"/>
</dbReference>
<dbReference type="PDB" id="6Z6N">
    <property type="method" value="EM"/>
    <property type="resolution" value="2.90 A"/>
    <property type="chains" value="SJ=1-194"/>
</dbReference>
<dbReference type="PDB" id="6ZLW">
    <property type="method" value="EM"/>
    <property type="resolution" value="2.60 A"/>
    <property type="chains" value="J=1-194"/>
</dbReference>
<dbReference type="PDB" id="6ZM7">
    <property type="method" value="EM"/>
    <property type="resolution" value="2.70 A"/>
    <property type="chains" value="SJ=1-194"/>
</dbReference>
<dbReference type="PDB" id="6ZME">
    <property type="method" value="EM"/>
    <property type="resolution" value="3.00 A"/>
    <property type="chains" value="SJ=1-194"/>
</dbReference>
<dbReference type="PDB" id="6ZMI">
    <property type="method" value="EM"/>
    <property type="resolution" value="2.60 A"/>
    <property type="chains" value="SJ=1-194"/>
</dbReference>
<dbReference type="PDB" id="6ZMO">
    <property type="method" value="EM"/>
    <property type="resolution" value="3.10 A"/>
    <property type="chains" value="SJ=1-194"/>
</dbReference>
<dbReference type="PDB" id="6ZMT">
    <property type="method" value="EM"/>
    <property type="resolution" value="3.00 A"/>
    <property type="chains" value="J=1-194"/>
</dbReference>
<dbReference type="PDB" id="6ZMW">
    <property type="method" value="EM"/>
    <property type="resolution" value="3.70 A"/>
    <property type="chains" value="D=1-194"/>
</dbReference>
<dbReference type="PDB" id="6ZN5">
    <property type="method" value="EM"/>
    <property type="resolution" value="3.20 A"/>
    <property type="chains" value="J=2-181"/>
</dbReference>
<dbReference type="PDB" id="6ZOJ">
    <property type="method" value="EM"/>
    <property type="resolution" value="2.80 A"/>
    <property type="chains" value="J=1-194"/>
</dbReference>
<dbReference type="PDB" id="6ZOK">
    <property type="method" value="EM"/>
    <property type="resolution" value="2.80 A"/>
    <property type="chains" value="J=1-194"/>
</dbReference>
<dbReference type="PDB" id="6ZON">
    <property type="method" value="EM"/>
    <property type="resolution" value="3.00 A"/>
    <property type="chains" value="c=1-194"/>
</dbReference>
<dbReference type="PDB" id="6ZP4">
    <property type="method" value="EM"/>
    <property type="resolution" value="2.90 A"/>
    <property type="chains" value="c=1-194"/>
</dbReference>
<dbReference type="PDB" id="6ZUO">
    <property type="method" value="EM"/>
    <property type="resolution" value="3.10 A"/>
    <property type="chains" value="J=1-194"/>
</dbReference>
<dbReference type="PDB" id="6ZV6">
    <property type="method" value="EM"/>
    <property type="resolution" value="2.90 A"/>
    <property type="chains" value="J=1-194"/>
</dbReference>
<dbReference type="PDB" id="6ZVH">
    <property type="method" value="EM"/>
    <property type="resolution" value="2.90 A"/>
    <property type="chains" value="J=2-186"/>
</dbReference>
<dbReference type="PDB" id="6ZVJ">
    <property type="method" value="EM"/>
    <property type="resolution" value="3.80 A"/>
    <property type="chains" value="c=2-181"/>
</dbReference>
<dbReference type="PDB" id="6ZXD">
    <property type="method" value="EM"/>
    <property type="resolution" value="3.20 A"/>
    <property type="chains" value="J=1-194"/>
</dbReference>
<dbReference type="PDB" id="6ZXE">
    <property type="method" value="EM"/>
    <property type="resolution" value="3.00 A"/>
    <property type="chains" value="J=1-194"/>
</dbReference>
<dbReference type="PDB" id="6ZXF">
    <property type="method" value="EM"/>
    <property type="resolution" value="3.70 A"/>
    <property type="chains" value="J=1-194"/>
</dbReference>
<dbReference type="PDB" id="6ZXG">
    <property type="method" value="EM"/>
    <property type="resolution" value="2.60 A"/>
    <property type="chains" value="J=1-194"/>
</dbReference>
<dbReference type="PDB" id="6ZXH">
    <property type="method" value="EM"/>
    <property type="resolution" value="2.70 A"/>
    <property type="chains" value="J=1-194"/>
</dbReference>
<dbReference type="PDB" id="7A09">
    <property type="method" value="EM"/>
    <property type="resolution" value="3.50 A"/>
    <property type="chains" value="c=1-194"/>
</dbReference>
<dbReference type="PDB" id="7K5I">
    <property type="method" value="EM"/>
    <property type="resolution" value="2.90 A"/>
    <property type="chains" value="J=1-194"/>
</dbReference>
<dbReference type="PDB" id="7MQ8">
    <property type="method" value="EM"/>
    <property type="resolution" value="3.60 A"/>
    <property type="chains" value="L9=1-194"/>
</dbReference>
<dbReference type="PDB" id="7MQ9">
    <property type="method" value="EM"/>
    <property type="resolution" value="3.87 A"/>
    <property type="chains" value="L9=1-194"/>
</dbReference>
<dbReference type="PDB" id="7MQA">
    <property type="method" value="EM"/>
    <property type="resolution" value="2.70 A"/>
    <property type="chains" value="L9=1-194"/>
</dbReference>
<dbReference type="PDB" id="7QP6">
    <property type="method" value="EM"/>
    <property type="resolution" value="4.70 A"/>
    <property type="chains" value="D=1-194"/>
</dbReference>
<dbReference type="PDB" id="7QP7">
    <property type="method" value="EM"/>
    <property type="resolution" value="3.70 A"/>
    <property type="chains" value="D=1-194"/>
</dbReference>
<dbReference type="PDB" id="7R4X">
    <property type="method" value="EM"/>
    <property type="resolution" value="2.15 A"/>
    <property type="chains" value="J=1-194"/>
</dbReference>
<dbReference type="PDB" id="7TQL">
    <property type="method" value="EM"/>
    <property type="resolution" value="3.40 A"/>
    <property type="chains" value="J=2-181"/>
</dbReference>
<dbReference type="PDB" id="7WTS">
    <property type="method" value="EM"/>
    <property type="resolution" value="3.20 A"/>
    <property type="chains" value="J=1-194"/>
</dbReference>
<dbReference type="PDB" id="7WTT">
    <property type="method" value="EM"/>
    <property type="resolution" value="3.10 A"/>
    <property type="chains" value="J=1-194"/>
</dbReference>
<dbReference type="PDB" id="7WTU">
    <property type="method" value="EM"/>
    <property type="resolution" value="3.00 A"/>
    <property type="chains" value="J=1-194"/>
</dbReference>
<dbReference type="PDB" id="7WTV">
    <property type="method" value="EM"/>
    <property type="resolution" value="3.50 A"/>
    <property type="chains" value="J=1-194"/>
</dbReference>
<dbReference type="PDB" id="7WTW">
    <property type="method" value="EM"/>
    <property type="resolution" value="3.20 A"/>
    <property type="chains" value="J=1-194"/>
</dbReference>
<dbReference type="PDB" id="7WTX">
    <property type="method" value="EM"/>
    <property type="resolution" value="3.10 A"/>
    <property type="chains" value="J=1-194"/>
</dbReference>
<dbReference type="PDB" id="7WTZ">
    <property type="method" value="EM"/>
    <property type="resolution" value="3.00 A"/>
    <property type="chains" value="J=1-194"/>
</dbReference>
<dbReference type="PDB" id="7WU0">
    <property type="method" value="EM"/>
    <property type="resolution" value="3.30 A"/>
    <property type="chains" value="J=1-194"/>
</dbReference>
<dbReference type="PDB" id="7XNX">
    <property type="method" value="EM"/>
    <property type="resolution" value="2.70 A"/>
    <property type="chains" value="SJ=1-194"/>
</dbReference>
<dbReference type="PDB" id="7XNY">
    <property type="method" value="EM"/>
    <property type="resolution" value="2.50 A"/>
    <property type="chains" value="SJ=1-194"/>
</dbReference>
<dbReference type="PDB" id="8G5Y">
    <property type="method" value="EM"/>
    <property type="resolution" value="2.29 A"/>
    <property type="chains" value="SJ=1-194"/>
</dbReference>
<dbReference type="PDB" id="8G5Z">
    <property type="method" value="EM"/>
    <property type="resolution" value="2.64 A"/>
    <property type="chains" value="SJ=2-186"/>
</dbReference>
<dbReference type="PDB" id="8G60">
    <property type="method" value="EM"/>
    <property type="resolution" value="2.54 A"/>
    <property type="chains" value="SJ=1-194"/>
</dbReference>
<dbReference type="PDB" id="8G61">
    <property type="method" value="EM"/>
    <property type="resolution" value="2.94 A"/>
    <property type="chains" value="SJ=1-194"/>
</dbReference>
<dbReference type="PDB" id="8G6J">
    <property type="method" value="EM"/>
    <property type="resolution" value="2.80 A"/>
    <property type="chains" value="SJ=1-194"/>
</dbReference>
<dbReference type="PDB" id="8GLP">
    <property type="method" value="EM"/>
    <property type="resolution" value="1.67 A"/>
    <property type="chains" value="SJ=1-194"/>
</dbReference>
<dbReference type="PDB" id="8IFD">
    <property type="method" value="EM"/>
    <property type="resolution" value="2.59 A"/>
    <property type="chains" value="3I=1-194"/>
</dbReference>
<dbReference type="PDB" id="8IFE">
    <property type="method" value="EM"/>
    <property type="resolution" value="2.57 A"/>
    <property type="chains" value="3I=1-194"/>
</dbReference>
<dbReference type="PDB" id="8JDJ">
    <property type="method" value="EM"/>
    <property type="resolution" value="2.50 A"/>
    <property type="chains" value="6=1-194"/>
</dbReference>
<dbReference type="PDB" id="8JDK">
    <property type="method" value="EM"/>
    <property type="resolution" value="2.26 A"/>
    <property type="chains" value="6=1-194"/>
</dbReference>
<dbReference type="PDB" id="8JDL">
    <property type="method" value="EM"/>
    <property type="resolution" value="2.42 A"/>
    <property type="chains" value="6=1-194"/>
</dbReference>
<dbReference type="PDB" id="8JDM">
    <property type="method" value="EM"/>
    <property type="resolution" value="2.67 A"/>
    <property type="chains" value="6=1-194"/>
</dbReference>
<dbReference type="PDB" id="8K2C">
    <property type="method" value="EM"/>
    <property type="resolution" value="2.40 A"/>
    <property type="chains" value="SJ=1-194"/>
</dbReference>
<dbReference type="PDB" id="8OZ0">
    <property type="method" value="EM"/>
    <property type="resolution" value="3.50 A"/>
    <property type="chains" value="Z=1-194"/>
</dbReference>
<dbReference type="PDB" id="8PJ1">
    <property type="method" value="EM"/>
    <property type="resolution" value="3.40 A"/>
    <property type="chains" value="D=1-194"/>
</dbReference>
<dbReference type="PDB" id="8PJ2">
    <property type="method" value="EM"/>
    <property type="resolution" value="3.40 A"/>
    <property type="chains" value="D=1-194"/>
</dbReference>
<dbReference type="PDB" id="8PJ3">
    <property type="method" value="EM"/>
    <property type="resolution" value="3.70 A"/>
    <property type="chains" value="D=1-194"/>
</dbReference>
<dbReference type="PDB" id="8PJ4">
    <property type="method" value="EM"/>
    <property type="resolution" value="3.20 A"/>
    <property type="chains" value="D=1-194"/>
</dbReference>
<dbReference type="PDB" id="8PJ5">
    <property type="method" value="EM"/>
    <property type="resolution" value="2.90 A"/>
    <property type="chains" value="D=1-194"/>
</dbReference>
<dbReference type="PDB" id="8PJ6">
    <property type="method" value="EM"/>
    <property type="resolution" value="2.90 A"/>
    <property type="chains" value="D=1-194"/>
</dbReference>
<dbReference type="PDB" id="8PPK">
    <property type="method" value="EM"/>
    <property type="resolution" value="2.98 A"/>
    <property type="chains" value="J=1-194"/>
</dbReference>
<dbReference type="PDB" id="8PPL">
    <property type="method" value="EM"/>
    <property type="resolution" value="2.65 A"/>
    <property type="chains" value="AJ=1-194"/>
</dbReference>
<dbReference type="PDB" id="8QOI">
    <property type="method" value="EM"/>
    <property type="resolution" value="1.90 A"/>
    <property type="chains" value="SJ=1-194"/>
</dbReference>
<dbReference type="PDB" id="8T4S">
    <property type="method" value="EM"/>
    <property type="resolution" value="2.60 A"/>
    <property type="chains" value="J=1-194"/>
</dbReference>
<dbReference type="PDB" id="8UKB">
    <property type="method" value="EM"/>
    <property type="resolution" value="3.05 A"/>
    <property type="chains" value="SJ=2-186"/>
</dbReference>
<dbReference type="PDB" id="8XP2">
    <property type="method" value="EM"/>
    <property type="resolution" value="3.20 A"/>
    <property type="chains" value="SJ=1-194"/>
</dbReference>
<dbReference type="PDB" id="8XP3">
    <property type="method" value="EM"/>
    <property type="resolution" value="3.40 A"/>
    <property type="chains" value="SJ=1-194"/>
</dbReference>
<dbReference type="PDB" id="8XSX">
    <property type="method" value="EM"/>
    <property type="resolution" value="2.40 A"/>
    <property type="chains" value="SJ=1-194"/>
</dbReference>
<dbReference type="PDB" id="8XSY">
    <property type="method" value="EM"/>
    <property type="resolution" value="3.00 A"/>
    <property type="chains" value="SJ=1-194"/>
</dbReference>
<dbReference type="PDB" id="8XSZ">
    <property type="method" value="EM"/>
    <property type="resolution" value="3.20 A"/>
    <property type="chains" value="SJ=1-194"/>
</dbReference>
<dbReference type="PDB" id="8XXL">
    <property type="method" value="EM"/>
    <property type="resolution" value="2.90 A"/>
    <property type="chains" value="SJ=1-194"/>
</dbReference>
<dbReference type="PDB" id="8XXM">
    <property type="method" value="EM"/>
    <property type="resolution" value="3.20 A"/>
    <property type="chains" value="SJ=1-194"/>
</dbReference>
<dbReference type="PDB" id="8XXN">
    <property type="method" value="EM"/>
    <property type="resolution" value="3.60 A"/>
    <property type="chains" value="SJ=1-194"/>
</dbReference>
<dbReference type="PDB" id="8Y0W">
    <property type="method" value="EM"/>
    <property type="resolution" value="3.40 A"/>
    <property type="chains" value="SJ=1-194"/>
</dbReference>
<dbReference type="PDB" id="8Y0X">
    <property type="method" value="EM"/>
    <property type="resolution" value="3.30 A"/>
    <property type="chains" value="SJ=1-194"/>
</dbReference>
<dbReference type="PDB" id="8YOO">
    <property type="method" value="EM"/>
    <property type="resolution" value="2.00 A"/>
    <property type="chains" value="SJ=1-194"/>
</dbReference>
<dbReference type="PDB" id="8YOP">
    <property type="method" value="EM"/>
    <property type="resolution" value="2.20 A"/>
    <property type="chains" value="SJ=1-194"/>
</dbReference>
<dbReference type="PDB" id="8ZDB">
    <property type="method" value="EM"/>
    <property type="resolution" value="3.60 A"/>
    <property type="chains" value="J=1-194"/>
</dbReference>
<dbReference type="PDB" id="8ZDC">
    <property type="method" value="EM"/>
    <property type="resolution" value="3.80 A"/>
    <property type="chains" value="J=1-194"/>
</dbReference>
<dbReference type="PDB" id="8ZDD">
    <property type="method" value="EM"/>
    <property type="resolution" value="3.70 A"/>
    <property type="chains" value="J=1-194"/>
</dbReference>
<dbReference type="PDB" id="9BKD">
    <property type="method" value="EM"/>
    <property type="resolution" value="2.60 A"/>
    <property type="chains" value="D=1-194"/>
</dbReference>
<dbReference type="PDB" id="9BLN">
    <property type="method" value="EM"/>
    <property type="resolution" value="3.90 A"/>
    <property type="chains" value="D=1-194"/>
</dbReference>
<dbReference type="PDB" id="9C3H">
    <property type="method" value="EM"/>
    <property type="resolution" value="2.00 A"/>
    <property type="chains" value="SJ=1-194"/>
</dbReference>
<dbReference type="PDB" id="9G8M">
    <property type="method" value="EM"/>
    <property type="resolution" value="3.30 A"/>
    <property type="chains" value="SJ=1-194"/>
</dbReference>
<dbReference type="PDB" id="9G8O">
    <property type="method" value="EM"/>
    <property type="resolution" value="3.40 A"/>
    <property type="chains" value="SJ=1-194"/>
</dbReference>
<dbReference type="PDBsum" id="4UG0"/>
<dbReference type="PDBsum" id="4V6X"/>
<dbReference type="PDBsum" id="5A2Q"/>
<dbReference type="PDBsum" id="5AJ0"/>
<dbReference type="PDBsum" id="5FLX"/>
<dbReference type="PDBsum" id="5LKS"/>
<dbReference type="PDBsum" id="5OA3"/>
<dbReference type="PDBsum" id="5T2C"/>
<dbReference type="PDBsum" id="5VYC"/>
<dbReference type="PDBsum" id="6FEC"/>
<dbReference type="PDBsum" id="6G18"/>
<dbReference type="PDBsum" id="6G4S"/>
<dbReference type="PDBsum" id="6G4W"/>
<dbReference type="PDBsum" id="6G51"/>
<dbReference type="PDBsum" id="6G53"/>
<dbReference type="PDBsum" id="6G5H"/>
<dbReference type="PDBsum" id="6G5I"/>
<dbReference type="PDBsum" id="6IP5"/>
<dbReference type="PDBsum" id="6IP6"/>
<dbReference type="PDBsum" id="6IP8"/>
<dbReference type="PDBsum" id="6OLE"/>
<dbReference type="PDBsum" id="6OLF"/>
<dbReference type="PDBsum" id="6OLG"/>
<dbReference type="PDBsum" id="6OLI"/>
<dbReference type="PDBsum" id="6OLZ"/>
<dbReference type="PDBsum" id="6OM0"/>
<dbReference type="PDBsum" id="6OM7"/>
<dbReference type="PDBsum" id="6QZP"/>
<dbReference type="PDBsum" id="6XA1"/>
<dbReference type="PDBsum" id="6Y0G"/>
<dbReference type="PDBsum" id="6Y2L"/>
<dbReference type="PDBsum" id="6Y57"/>
<dbReference type="PDBsum" id="6YBW"/>
<dbReference type="PDBsum" id="6Z6L"/>
<dbReference type="PDBsum" id="6Z6M"/>
<dbReference type="PDBsum" id="6Z6N"/>
<dbReference type="PDBsum" id="6ZLW"/>
<dbReference type="PDBsum" id="6ZM7"/>
<dbReference type="PDBsum" id="6ZME"/>
<dbReference type="PDBsum" id="6ZMI"/>
<dbReference type="PDBsum" id="6ZMO"/>
<dbReference type="PDBsum" id="6ZMT"/>
<dbReference type="PDBsum" id="6ZMW"/>
<dbReference type="PDBsum" id="6ZN5"/>
<dbReference type="PDBsum" id="6ZOJ"/>
<dbReference type="PDBsum" id="6ZOK"/>
<dbReference type="PDBsum" id="6ZON"/>
<dbReference type="PDBsum" id="6ZP4"/>
<dbReference type="PDBsum" id="6ZUO"/>
<dbReference type="PDBsum" id="6ZV6"/>
<dbReference type="PDBsum" id="6ZVH"/>
<dbReference type="PDBsum" id="6ZVJ"/>
<dbReference type="PDBsum" id="6ZXD"/>
<dbReference type="PDBsum" id="6ZXE"/>
<dbReference type="PDBsum" id="6ZXF"/>
<dbReference type="PDBsum" id="6ZXG"/>
<dbReference type="PDBsum" id="6ZXH"/>
<dbReference type="PDBsum" id="7A09"/>
<dbReference type="PDBsum" id="7K5I"/>
<dbReference type="PDBsum" id="7MQ8"/>
<dbReference type="PDBsum" id="7MQ9"/>
<dbReference type="PDBsum" id="7MQA"/>
<dbReference type="PDBsum" id="7QP6"/>
<dbReference type="PDBsum" id="7QP7"/>
<dbReference type="PDBsum" id="7R4X"/>
<dbReference type="PDBsum" id="7TQL"/>
<dbReference type="PDBsum" id="7WTS"/>
<dbReference type="PDBsum" id="7WTT"/>
<dbReference type="PDBsum" id="7WTU"/>
<dbReference type="PDBsum" id="7WTV"/>
<dbReference type="PDBsum" id="7WTW"/>
<dbReference type="PDBsum" id="7WTX"/>
<dbReference type="PDBsum" id="7WTZ"/>
<dbReference type="PDBsum" id="7WU0"/>
<dbReference type="PDBsum" id="7XNX"/>
<dbReference type="PDBsum" id="7XNY"/>
<dbReference type="PDBsum" id="8G5Y"/>
<dbReference type="PDBsum" id="8G5Z"/>
<dbReference type="PDBsum" id="8G60"/>
<dbReference type="PDBsum" id="8G61"/>
<dbReference type="PDBsum" id="8G6J"/>
<dbReference type="PDBsum" id="8GLP"/>
<dbReference type="PDBsum" id="8IFD"/>
<dbReference type="PDBsum" id="8IFE"/>
<dbReference type="PDBsum" id="8JDJ"/>
<dbReference type="PDBsum" id="8JDK"/>
<dbReference type="PDBsum" id="8JDL"/>
<dbReference type="PDBsum" id="8JDM"/>
<dbReference type="PDBsum" id="8K2C"/>
<dbReference type="PDBsum" id="8OZ0"/>
<dbReference type="PDBsum" id="8PJ1"/>
<dbReference type="PDBsum" id="8PJ2"/>
<dbReference type="PDBsum" id="8PJ3"/>
<dbReference type="PDBsum" id="8PJ4"/>
<dbReference type="PDBsum" id="8PJ5"/>
<dbReference type="PDBsum" id="8PJ6"/>
<dbReference type="PDBsum" id="8PPK"/>
<dbReference type="PDBsum" id="8PPL"/>
<dbReference type="PDBsum" id="8QOI"/>
<dbReference type="PDBsum" id="8T4S"/>
<dbReference type="PDBsum" id="8UKB"/>
<dbReference type="PDBsum" id="8XP2"/>
<dbReference type="PDBsum" id="8XP3"/>
<dbReference type="PDBsum" id="8XSX"/>
<dbReference type="PDBsum" id="8XSY"/>
<dbReference type="PDBsum" id="8XSZ"/>
<dbReference type="PDBsum" id="8XXL"/>
<dbReference type="PDBsum" id="8XXM"/>
<dbReference type="PDBsum" id="8XXN"/>
<dbReference type="PDBsum" id="8Y0W"/>
<dbReference type="PDBsum" id="8Y0X"/>
<dbReference type="PDBsum" id="8YOO"/>
<dbReference type="PDBsum" id="8YOP"/>
<dbReference type="PDBsum" id="8ZDB"/>
<dbReference type="PDBsum" id="8ZDC"/>
<dbReference type="PDBsum" id="8ZDD"/>
<dbReference type="PDBsum" id="9BKD"/>
<dbReference type="PDBsum" id="9BLN"/>
<dbReference type="PDBsum" id="9C3H"/>
<dbReference type="PDBsum" id="9G8M"/>
<dbReference type="PDBsum" id="9G8O"/>
<dbReference type="EMDB" id="EMD-10668"/>
<dbReference type="EMDB" id="EMD-10674"/>
<dbReference type="EMDB" id="EMD-10690"/>
<dbReference type="EMDB" id="EMD-10775"/>
<dbReference type="EMDB" id="EMD-11098"/>
<dbReference type="EMDB" id="EMD-11099"/>
<dbReference type="EMDB" id="EMD-11100"/>
<dbReference type="EMDB" id="EMD-11276"/>
<dbReference type="EMDB" id="EMD-11288"/>
<dbReference type="EMDB" id="EMD-11289"/>
<dbReference type="EMDB" id="EMD-11292"/>
<dbReference type="EMDB" id="EMD-11299"/>
<dbReference type="EMDB" id="EMD-11301"/>
<dbReference type="EMDB" id="EMD-11302"/>
<dbReference type="EMDB" id="EMD-11310"/>
<dbReference type="EMDB" id="EMD-11320"/>
<dbReference type="EMDB" id="EMD-11321"/>
<dbReference type="EMDB" id="EMD-11325"/>
<dbReference type="EMDB" id="EMD-11335"/>
<dbReference type="EMDB" id="EMD-11440"/>
<dbReference type="EMDB" id="EMD-11441"/>
<dbReference type="EMDB" id="EMD-11456"/>
<dbReference type="EMDB" id="EMD-11458"/>
<dbReference type="EMDB" id="EMD-11517"/>
<dbReference type="EMDB" id="EMD-11518"/>
<dbReference type="EMDB" id="EMD-11519"/>
<dbReference type="EMDB" id="EMD-11520"/>
<dbReference type="EMDB" id="EMD-11521"/>
<dbReference type="EMDB" id="EMD-11602"/>
<dbReference type="EMDB" id="EMD-14113"/>
<dbReference type="EMDB" id="EMD-14114"/>
<dbReference type="EMDB" id="EMD-14317"/>
<dbReference type="EMDB" id="EMD-17297"/>
<dbReference type="EMDB" id="EMD-17696"/>
<dbReference type="EMDB" id="EMD-17697"/>
<dbReference type="EMDB" id="EMD-17698"/>
<dbReference type="EMDB" id="EMD-17699"/>
<dbReference type="EMDB" id="EMD-17700"/>
<dbReference type="EMDB" id="EMD-17701"/>
<dbReference type="EMDB" id="EMD-17804"/>
<dbReference type="EMDB" id="EMD-17805"/>
<dbReference type="EMDB" id="EMD-18539"/>
<dbReference type="EMDB" id="EMD-22681"/>
<dbReference type="EMDB" id="EMD-23936"/>
<dbReference type="EMDB" id="EMD-23937"/>
<dbReference type="EMDB" id="EMD-23938"/>
<dbReference type="EMDB" id="EMD-26067"/>
<dbReference type="EMDB" id="EMD-29757"/>
<dbReference type="EMDB" id="EMD-29758"/>
<dbReference type="EMDB" id="EMD-29759"/>
<dbReference type="EMDB" id="EMD-29760"/>
<dbReference type="EMDB" id="EMD-29771"/>
<dbReference type="EMDB" id="EMD-32799"/>
<dbReference type="EMDB" id="EMD-32800"/>
<dbReference type="EMDB" id="EMD-32801"/>
<dbReference type="EMDB" id="EMD-32802"/>
<dbReference type="EMDB" id="EMD-32803"/>
<dbReference type="EMDB" id="EMD-32804"/>
<dbReference type="EMDB" id="EMD-32806"/>
<dbReference type="EMDB" id="EMD-32807"/>
<dbReference type="EMDB" id="EMD-33329"/>
<dbReference type="EMDB" id="EMD-33330"/>
<dbReference type="EMDB" id="EMD-35413"/>
<dbReference type="EMDB" id="EMD-35414"/>
<dbReference type="EMDB" id="EMD-36178"/>
<dbReference type="EMDB" id="EMD-36179"/>
<dbReference type="EMDB" id="EMD-36180"/>
<dbReference type="EMDB" id="EMD-36181"/>
<dbReference type="EMDB" id="EMD-36838"/>
<dbReference type="EMDB" id="EMD-3770"/>
<dbReference type="EMDB" id="EMD-38548"/>
<dbReference type="EMDB" id="EMD-38549"/>
<dbReference type="EMDB" id="EMD-38629"/>
<dbReference type="EMDB" id="EMD-38630"/>
<dbReference type="EMDB" id="EMD-38631"/>
<dbReference type="EMDB" id="EMD-38752"/>
<dbReference type="EMDB" id="EMD-38753"/>
<dbReference type="EMDB" id="EMD-38754"/>
<dbReference type="EMDB" id="EMD-3883"/>
<dbReference type="EMDB" id="EMD-39455"/>
<dbReference type="EMDB" id="EMD-39456"/>
<dbReference type="EMDB" id="EMD-39956"/>
<dbReference type="EMDB" id="EMD-39957"/>
<dbReference type="EMDB" id="EMD-39958"/>
<dbReference type="EMDB" id="EMD-40205"/>
<dbReference type="EMDB" id="EMD-4070"/>
<dbReference type="EMDB" id="EMD-41039"/>
<dbReference type="EMDB" id="EMD-42351"/>
<dbReference type="EMDB" id="EMD-4242"/>
<dbReference type="EMDB" id="EMD-4337"/>
<dbReference type="EMDB" id="EMD-4348"/>
<dbReference type="EMDB" id="EMD-4349"/>
<dbReference type="EMDB" id="EMD-4350"/>
<dbReference type="EMDB" id="EMD-4351"/>
<dbReference type="EMDB" id="EMD-4352"/>
<dbReference type="EMDB" id="EMD-4353"/>
<dbReference type="EMDB" id="EMD-44641"/>
<dbReference type="EMDB" id="EMD-44671"/>
<dbReference type="EMDB" id="EMD-45170"/>
<dbReference type="EMDB" id="EMD-51132"/>
<dbReference type="EMDB" id="EMD-51134"/>
<dbReference type="EMDB" id="EMD-9701"/>
<dbReference type="EMDB" id="EMD-9702"/>
<dbReference type="EMDB" id="EMD-9703"/>
<dbReference type="SMR" id="P46781"/>
<dbReference type="BioGRID" id="112117">
    <property type="interactions" value="609"/>
</dbReference>
<dbReference type="ComplexPortal" id="CPX-5223">
    <property type="entry name" value="40S cytosolic small ribosomal subunit"/>
</dbReference>
<dbReference type="CORUM" id="P46781"/>
<dbReference type="FunCoup" id="P46781">
    <property type="interactions" value="1764"/>
</dbReference>
<dbReference type="IntAct" id="P46781">
    <property type="interactions" value="257"/>
</dbReference>
<dbReference type="MINT" id="P46781"/>
<dbReference type="STRING" id="9606.ENSP00000375632"/>
<dbReference type="DrugBank" id="DB11638">
    <property type="generic name" value="Artenimol"/>
</dbReference>
<dbReference type="GlyGen" id="P46781">
    <property type="glycosylation" value="2 sites, 1 O-linked glycan (1 site)"/>
</dbReference>
<dbReference type="iPTMnet" id="P46781"/>
<dbReference type="MetOSite" id="P46781"/>
<dbReference type="PhosphoSitePlus" id="P46781"/>
<dbReference type="SwissPalm" id="P46781"/>
<dbReference type="BioMuta" id="RPS9"/>
<dbReference type="DMDM" id="20178311"/>
<dbReference type="jPOST" id="P46781"/>
<dbReference type="MassIVE" id="P46781"/>
<dbReference type="PaxDb" id="9606-ENSP00000302896"/>
<dbReference type="PeptideAtlas" id="P46781"/>
<dbReference type="ProteomicsDB" id="55763"/>
<dbReference type="Pumba" id="P46781"/>
<dbReference type="TopDownProteomics" id="P46781"/>
<dbReference type="Antibodypedia" id="35226">
    <property type="antibodies" value="234 antibodies from 29 providers"/>
</dbReference>
<dbReference type="DNASU" id="6203"/>
<dbReference type="Ensembl" id="ENST00000302907.9">
    <property type="protein sequence ID" value="ENSP00000302896.4"/>
    <property type="gene ID" value="ENSG00000170889.14"/>
</dbReference>
<dbReference type="Ensembl" id="ENST00000391752.5">
    <property type="protein sequence ID" value="ENSP00000375632.1"/>
    <property type="gene ID" value="ENSG00000170889.14"/>
</dbReference>
<dbReference type="Ensembl" id="ENST00000391753.6">
    <property type="protein sequence ID" value="ENSP00000375633.2"/>
    <property type="gene ID" value="ENSG00000170889.14"/>
</dbReference>
<dbReference type="Ensembl" id="ENST00000610826.4">
    <property type="protein sequence ID" value="ENSP00000481764.1"/>
    <property type="gene ID" value="ENSG00000278270.4"/>
</dbReference>
<dbReference type="Ensembl" id="ENST00000610953.3">
    <property type="protein sequence ID" value="ENSP00000482023.1"/>
    <property type="gene ID" value="ENSG00000278081.3"/>
</dbReference>
<dbReference type="Ensembl" id="ENST00000611921.4">
    <property type="protein sequence ID" value="ENSP00000480662.1"/>
    <property type="gene ID" value="ENSG00000274950.4"/>
</dbReference>
<dbReference type="Ensembl" id="ENST00000614737.4">
    <property type="protein sequence ID" value="ENSP00000482338.1"/>
    <property type="gene ID" value="ENSG00000278270.4"/>
</dbReference>
<dbReference type="Ensembl" id="ENST00000615346.4">
    <property type="protein sequence ID" value="ENSP00000481553.1"/>
    <property type="gene ID" value="ENSG00000274646.4"/>
</dbReference>
<dbReference type="Ensembl" id="ENST00000616082.3">
    <property type="protein sequence ID" value="ENSP00000482475.1"/>
    <property type="gene ID" value="ENSG00000274646.4"/>
</dbReference>
<dbReference type="Ensembl" id="ENST00000616536.4">
    <property type="protein sequence ID" value="ENSP00000481822.1"/>
    <property type="gene ID" value="ENSG00000274950.4"/>
</dbReference>
<dbReference type="Ensembl" id="ENST00000616839.3">
    <property type="protein sequence ID" value="ENSP00000484394.1"/>
    <property type="gene ID" value="ENSG00000277359.3"/>
</dbReference>
<dbReference type="Ensembl" id="ENST00000616877.3">
    <property type="protein sequence ID" value="ENSP00000481194.1"/>
    <property type="gene ID" value="ENSG00000274950.4"/>
</dbReference>
<dbReference type="Ensembl" id="ENST00000616928.3">
    <property type="protein sequence ID" value="ENSP00000481655.1"/>
    <property type="gene ID" value="ENSG00000274626.3"/>
</dbReference>
<dbReference type="Ensembl" id="ENST00000617291.3">
    <property type="protein sequence ID" value="ENSP00000482274.1"/>
    <property type="gene ID" value="ENSG00000274005.3"/>
</dbReference>
<dbReference type="Ensembl" id="ENST00000618751.3">
    <property type="protein sequence ID" value="ENSP00000480135.1"/>
    <property type="gene ID" value="ENSG00000275323.3"/>
</dbReference>
<dbReference type="Ensembl" id="ENST00000619229.4">
    <property type="protein sequence ID" value="ENSP00000479917.1"/>
    <property type="gene ID" value="ENSG00000278270.4"/>
</dbReference>
<dbReference type="Ensembl" id="ENST00000620720.3">
    <property type="protein sequence ID" value="ENSP00000478449.1"/>
    <property type="gene ID" value="ENSG00000277079.3"/>
</dbReference>
<dbReference type="Ensembl" id="ENST00000620940.4">
    <property type="protein sequence ID" value="ENSP00000483179.1"/>
    <property type="gene ID" value="ENSG00000274646.4"/>
</dbReference>
<dbReference type="GeneID" id="6203"/>
<dbReference type="KEGG" id="hsa:6203"/>
<dbReference type="MANE-Select" id="ENST00000302907.9">
    <property type="protein sequence ID" value="ENSP00000302896.4"/>
    <property type="RefSeq nucleotide sequence ID" value="NM_001013.4"/>
    <property type="RefSeq protein sequence ID" value="NP_001004.2"/>
</dbReference>
<dbReference type="UCSC" id="uc002qdx.4">
    <property type="organism name" value="human"/>
</dbReference>
<dbReference type="AGR" id="HGNC:10442"/>
<dbReference type="CTD" id="6203"/>
<dbReference type="DisGeNET" id="6203"/>
<dbReference type="GeneCards" id="RPS9"/>
<dbReference type="HGNC" id="HGNC:10442">
    <property type="gene designation" value="RPS9"/>
</dbReference>
<dbReference type="HPA" id="ENSG00000170889">
    <property type="expression patterns" value="Low tissue specificity"/>
</dbReference>
<dbReference type="MIM" id="603631">
    <property type="type" value="gene"/>
</dbReference>
<dbReference type="neXtProt" id="NX_P46781"/>
<dbReference type="OpenTargets" id="ENSG00000170889"/>
<dbReference type="PharmGKB" id="PA34857"/>
<dbReference type="VEuPathDB" id="HostDB:ENSG00000170889"/>
<dbReference type="eggNOG" id="KOG3301">
    <property type="taxonomic scope" value="Eukaryota"/>
</dbReference>
<dbReference type="GeneTree" id="ENSGT00550000074829"/>
<dbReference type="HOGENOM" id="CLU_089738_0_0_1"/>
<dbReference type="InParanoid" id="P46781"/>
<dbReference type="OMA" id="RQFITHG"/>
<dbReference type="OrthoDB" id="1697570at2759"/>
<dbReference type="PAN-GO" id="P46781">
    <property type="GO annotations" value="4 GO annotations based on evolutionary models"/>
</dbReference>
<dbReference type="PhylomeDB" id="P46781"/>
<dbReference type="TreeFam" id="TF300795"/>
<dbReference type="PathwayCommons" id="P46781"/>
<dbReference type="Reactome" id="R-HSA-156827">
    <property type="pathway name" value="L13a-mediated translational silencing of Ceruloplasmin expression"/>
</dbReference>
<dbReference type="Reactome" id="R-HSA-156902">
    <property type="pathway name" value="Peptide chain elongation"/>
</dbReference>
<dbReference type="Reactome" id="R-HSA-1799339">
    <property type="pathway name" value="SRP-dependent cotranslational protein targeting to membrane"/>
</dbReference>
<dbReference type="Reactome" id="R-HSA-192823">
    <property type="pathway name" value="Viral mRNA Translation"/>
</dbReference>
<dbReference type="Reactome" id="R-HSA-2408557">
    <property type="pathway name" value="Selenocysteine synthesis"/>
</dbReference>
<dbReference type="Reactome" id="R-HSA-6790901">
    <property type="pathway name" value="rRNA modification in the nucleus and cytosol"/>
</dbReference>
<dbReference type="Reactome" id="R-HSA-6791226">
    <property type="pathway name" value="Major pathway of rRNA processing in the nucleolus and cytosol"/>
</dbReference>
<dbReference type="Reactome" id="R-HSA-72649">
    <property type="pathway name" value="Translation initiation complex formation"/>
</dbReference>
<dbReference type="Reactome" id="R-HSA-72689">
    <property type="pathway name" value="Formation of a pool of free 40S subunits"/>
</dbReference>
<dbReference type="Reactome" id="R-HSA-72695">
    <property type="pathway name" value="Formation of the ternary complex, and subsequently, the 43S complex"/>
</dbReference>
<dbReference type="Reactome" id="R-HSA-72702">
    <property type="pathway name" value="Ribosomal scanning and start codon recognition"/>
</dbReference>
<dbReference type="Reactome" id="R-HSA-72706">
    <property type="pathway name" value="GTP hydrolysis and joining of the 60S ribosomal subunit"/>
</dbReference>
<dbReference type="Reactome" id="R-HSA-72764">
    <property type="pathway name" value="Eukaryotic Translation Termination"/>
</dbReference>
<dbReference type="Reactome" id="R-HSA-9010553">
    <property type="pathway name" value="Regulation of expression of SLITs and ROBOs"/>
</dbReference>
<dbReference type="Reactome" id="R-HSA-9633012">
    <property type="pathway name" value="Response of EIF2AK4 (GCN2) to amino acid deficiency"/>
</dbReference>
<dbReference type="Reactome" id="R-HSA-9735869">
    <property type="pathway name" value="SARS-CoV-1 modulates host translation machinery"/>
</dbReference>
<dbReference type="Reactome" id="R-HSA-9754678">
    <property type="pathway name" value="SARS-CoV-2 modulates host translation machinery"/>
</dbReference>
<dbReference type="Reactome" id="R-HSA-975956">
    <property type="pathway name" value="Nonsense Mediated Decay (NMD) independent of the Exon Junction Complex (EJC)"/>
</dbReference>
<dbReference type="Reactome" id="R-HSA-975957">
    <property type="pathway name" value="Nonsense Mediated Decay (NMD) enhanced by the Exon Junction Complex (EJC)"/>
</dbReference>
<dbReference type="SignaLink" id="P46781"/>
<dbReference type="SIGNOR" id="P46781"/>
<dbReference type="BioGRID-ORCS" id="6203">
    <property type="hits" value="842 hits in 1159 CRISPR screens"/>
</dbReference>
<dbReference type="CD-CODE" id="232F8A39">
    <property type="entry name" value="P-body"/>
</dbReference>
<dbReference type="CD-CODE" id="91857CE7">
    <property type="entry name" value="Nucleolus"/>
</dbReference>
<dbReference type="CD-CODE" id="DEE660B4">
    <property type="entry name" value="Stress granule"/>
</dbReference>
<dbReference type="CD-CODE" id="F85A2E29">
    <property type="entry name" value="IMP1 RNP granule"/>
</dbReference>
<dbReference type="ChiTaRS" id="RPS9">
    <property type="organism name" value="human"/>
</dbReference>
<dbReference type="EvolutionaryTrace" id="P46781"/>
<dbReference type="GeneWiki" id="RPS9"/>
<dbReference type="GenomeRNAi" id="6203"/>
<dbReference type="Pharos" id="P46781">
    <property type="development level" value="Tbio"/>
</dbReference>
<dbReference type="PRO" id="PR:P46781"/>
<dbReference type="Proteomes" id="UP000005640">
    <property type="component" value="Chromosome 19"/>
</dbReference>
<dbReference type="RNAct" id="P46781">
    <property type="molecule type" value="protein"/>
</dbReference>
<dbReference type="Bgee" id="ENSG00000170889">
    <property type="expression patterns" value="Expressed in monocyte and 99 other cell types or tissues"/>
</dbReference>
<dbReference type="ExpressionAtlas" id="P46781">
    <property type="expression patterns" value="baseline and differential"/>
</dbReference>
<dbReference type="GO" id="GO:0005737">
    <property type="term" value="C:cytoplasm"/>
    <property type="evidence" value="ECO:0000314"/>
    <property type="project" value="UniProtKB"/>
</dbReference>
<dbReference type="GO" id="GO:0005829">
    <property type="term" value="C:cytosol"/>
    <property type="evidence" value="ECO:0000304"/>
    <property type="project" value="Reactome"/>
</dbReference>
<dbReference type="GO" id="GO:0022626">
    <property type="term" value="C:cytosolic ribosome"/>
    <property type="evidence" value="ECO:0000314"/>
    <property type="project" value="FlyBase"/>
</dbReference>
<dbReference type="GO" id="GO:0022627">
    <property type="term" value="C:cytosolic small ribosomal subunit"/>
    <property type="evidence" value="ECO:0000314"/>
    <property type="project" value="UniProtKB"/>
</dbReference>
<dbReference type="GO" id="GO:0070062">
    <property type="term" value="C:extracellular exosome"/>
    <property type="evidence" value="ECO:0007005"/>
    <property type="project" value="UniProtKB"/>
</dbReference>
<dbReference type="GO" id="GO:0005925">
    <property type="term" value="C:focal adhesion"/>
    <property type="evidence" value="ECO:0007005"/>
    <property type="project" value="UniProtKB"/>
</dbReference>
<dbReference type="GO" id="GO:0016020">
    <property type="term" value="C:membrane"/>
    <property type="evidence" value="ECO:0007005"/>
    <property type="project" value="UniProtKB"/>
</dbReference>
<dbReference type="GO" id="GO:0005730">
    <property type="term" value="C:nucleolus"/>
    <property type="evidence" value="ECO:0000314"/>
    <property type="project" value="UniProtKB"/>
</dbReference>
<dbReference type="GO" id="GO:0005654">
    <property type="term" value="C:nucleoplasm"/>
    <property type="evidence" value="ECO:0000304"/>
    <property type="project" value="Reactome"/>
</dbReference>
<dbReference type="GO" id="GO:0005634">
    <property type="term" value="C:nucleus"/>
    <property type="evidence" value="ECO:0007005"/>
    <property type="project" value="UniProtKB"/>
</dbReference>
<dbReference type="GO" id="GO:1990904">
    <property type="term" value="C:ribonucleoprotein complex"/>
    <property type="evidence" value="ECO:0000314"/>
    <property type="project" value="UniProtKB"/>
</dbReference>
<dbReference type="GO" id="GO:0005840">
    <property type="term" value="C:ribosome"/>
    <property type="evidence" value="ECO:0000303"/>
    <property type="project" value="UniProtKB"/>
</dbReference>
<dbReference type="GO" id="GO:0032040">
    <property type="term" value="C:small-subunit processome"/>
    <property type="evidence" value="ECO:0000314"/>
    <property type="project" value="UniProtKB"/>
</dbReference>
<dbReference type="GO" id="GO:0045202">
    <property type="term" value="C:synapse"/>
    <property type="evidence" value="ECO:0007669"/>
    <property type="project" value="Ensembl"/>
</dbReference>
<dbReference type="GO" id="GO:0003723">
    <property type="term" value="F:RNA binding"/>
    <property type="evidence" value="ECO:0007005"/>
    <property type="project" value="UniProtKB"/>
</dbReference>
<dbReference type="GO" id="GO:0019843">
    <property type="term" value="F:rRNA binding"/>
    <property type="evidence" value="ECO:0000318"/>
    <property type="project" value="GO_Central"/>
</dbReference>
<dbReference type="GO" id="GO:0003735">
    <property type="term" value="F:structural constituent of ribosome"/>
    <property type="evidence" value="ECO:0000314"/>
    <property type="project" value="FlyBase"/>
</dbReference>
<dbReference type="GO" id="GO:0045182">
    <property type="term" value="F:translation regulator activity"/>
    <property type="evidence" value="ECO:0000315"/>
    <property type="project" value="UniProtKB"/>
</dbReference>
<dbReference type="GO" id="GO:0002181">
    <property type="term" value="P:cytoplasmic translation"/>
    <property type="evidence" value="ECO:0000303"/>
    <property type="project" value="ComplexPortal"/>
</dbReference>
<dbReference type="GO" id="GO:0008284">
    <property type="term" value="P:positive regulation of cell population proliferation"/>
    <property type="evidence" value="ECO:0000315"/>
    <property type="project" value="UniProtKB"/>
</dbReference>
<dbReference type="GO" id="GO:0042274">
    <property type="term" value="P:ribosomal small subunit biogenesis"/>
    <property type="evidence" value="ECO:0000314"/>
    <property type="project" value="UniProtKB"/>
</dbReference>
<dbReference type="GO" id="GO:0006412">
    <property type="term" value="P:translation"/>
    <property type="evidence" value="ECO:0000315"/>
    <property type="project" value="UniProtKB"/>
</dbReference>
<dbReference type="CDD" id="cd00165">
    <property type="entry name" value="S4"/>
    <property type="match status" value="1"/>
</dbReference>
<dbReference type="FunFam" id="3.10.290.10:FF:000021">
    <property type="entry name" value="40S ribosomal protein S9"/>
    <property type="match status" value="1"/>
</dbReference>
<dbReference type="Gene3D" id="3.10.290.10">
    <property type="entry name" value="RNA-binding S4 domain"/>
    <property type="match status" value="1"/>
</dbReference>
<dbReference type="InterPro" id="IPR022801">
    <property type="entry name" value="Ribosomal_uS4"/>
</dbReference>
<dbReference type="InterPro" id="IPR018079">
    <property type="entry name" value="Ribosomal_uS4_CS"/>
</dbReference>
<dbReference type="InterPro" id="IPR005710">
    <property type="entry name" value="Ribosomal_uS4_euk/arc"/>
</dbReference>
<dbReference type="InterPro" id="IPR001912">
    <property type="entry name" value="Ribosomal_uS4_N"/>
</dbReference>
<dbReference type="InterPro" id="IPR002942">
    <property type="entry name" value="S4_RNA-bd"/>
</dbReference>
<dbReference type="InterPro" id="IPR036986">
    <property type="entry name" value="S4_RNA-bd_sf"/>
</dbReference>
<dbReference type="NCBIfam" id="NF003139">
    <property type="entry name" value="PRK04051.1"/>
    <property type="match status" value="1"/>
</dbReference>
<dbReference type="NCBIfam" id="TIGR01018">
    <property type="entry name" value="uS4_arch"/>
    <property type="match status" value="1"/>
</dbReference>
<dbReference type="PANTHER" id="PTHR11831">
    <property type="entry name" value="30S 40S RIBOSOMAL PROTEIN"/>
    <property type="match status" value="1"/>
</dbReference>
<dbReference type="PANTHER" id="PTHR11831:SF46">
    <property type="entry name" value="SMALL RIBOSOMAL SUBUNIT PROTEIN US4"/>
    <property type="match status" value="1"/>
</dbReference>
<dbReference type="Pfam" id="PF00163">
    <property type="entry name" value="Ribosomal_S4"/>
    <property type="match status" value="1"/>
</dbReference>
<dbReference type="Pfam" id="PF01479">
    <property type="entry name" value="S4"/>
    <property type="match status" value="1"/>
</dbReference>
<dbReference type="SMART" id="SM01390">
    <property type="entry name" value="Ribosomal_S4"/>
    <property type="match status" value="1"/>
</dbReference>
<dbReference type="SMART" id="SM00363">
    <property type="entry name" value="S4"/>
    <property type="match status" value="1"/>
</dbReference>
<dbReference type="SUPFAM" id="SSF55174">
    <property type="entry name" value="Alpha-L RNA-binding motif"/>
    <property type="match status" value="1"/>
</dbReference>
<dbReference type="PROSITE" id="PS00632">
    <property type="entry name" value="RIBOSOMAL_S4"/>
    <property type="match status" value="1"/>
</dbReference>
<dbReference type="PROSITE" id="PS50889">
    <property type="entry name" value="S4"/>
    <property type="match status" value="1"/>
</dbReference>
<name>RS9_HUMAN</name>
<gene>
    <name evidence="11" type="primary">RPS9</name>
</gene>
<sequence>MPVARSWVCRKTYVTPRRPFEKSRLDQELKLIGEYGLRNKREVWRVKFTLAKIRKAARELLTLDEKDPRRLFEGNALLRRLVRIGVLDEGKMKLDYILGLKIEDFLERRLQTQVFKLGLAKSIHHARVLIRQRHIRVRKQVVNIPSFIVRLDSQKHIDFSLRSPYGGGRPGRVKRKNAKKGQGGAGAGDDEEED</sequence>
<reference key="1">
    <citation type="journal article" date="1995" name="Biochim. Biophys. Acta">
        <title>Cloning, sequencing and expression of the L5, L21, L27a, L28, S5, S9, S10 and S29 human ribosomal protein mRNAs.</title>
        <authorList>
            <person name="Frigerio J.-M."/>
            <person name="Dagorn J.-C."/>
            <person name="Iovanna J.L."/>
        </authorList>
    </citation>
    <scope>NUCLEOTIDE SEQUENCE [MRNA]</scope>
    <source>
        <tissue>Colon</tissue>
    </source>
</reference>
<reference key="2">
    <citation type="journal article" date="2002" name="Genome Res.">
        <title>The human ribosomal protein genes: sequencing and comparative analysis of 73 genes.</title>
        <authorList>
            <person name="Yoshihama M."/>
            <person name="Uechi T."/>
            <person name="Asakawa S."/>
            <person name="Kawasaki K."/>
            <person name="Kato S."/>
            <person name="Higa S."/>
            <person name="Maeda N."/>
            <person name="Minoshima S."/>
            <person name="Tanaka T."/>
            <person name="Shimizu N."/>
            <person name="Kenmochi N."/>
        </authorList>
    </citation>
    <scope>NUCLEOTIDE SEQUENCE [GENOMIC DNA]</scope>
</reference>
<reference key="3">
    <citation type="journal article" date="2004" name="Nature">
        <title>The DNA sequence and biology of human chromosome 19.</title>
        <authorList>
            <person name="Grimwood J."/>
            <person name="Gordon L.A."/>
            <person name="Olsen A.S."/>
            <person name="Terry A."/>
            <person name="Schmutz J."/>
            <person name="Lamerdin J.E."/>
            <person name="Hellsten U."/>
            <person name="Goodstein D."/>
            <person name="Couronne O."/>
            <person name="Tran-Gyamfi M."/>
            <person name="Aerts A."/>
            <person name="Altherr M."/>
            <person name="Ashworth L."/>
            <person name="Bajorek E."/>
            <person name="Black S."/>
            <person name="Branscomb E."/>
            <person name="Caenepeel S."/>
            <person name="Carrano A.V."/>
            <person name="Caoile C."/>
            <person name="Chan Y.M."/>
            <person name="Christensen M."/>
            <person name="Cleland C.A."/>
            <person name="Copeland A."/>
            <person name="Dalin E."/>
            <person name="Dehal P."/>
            <person name="Denys M."/>
            <person name="Detter J.C."/>
            <person name="Escobar J."/>
            <person name="Flowers D."/>
            <person name="Fotopulos D."/>
            <person name="Garcia C."/>
            <person name="Georgescu A.M."/>
            <person name="Glavina T."/>
            <person name="Gomez M."/>
            <person name="Gonzales E."/>
            <person name="Groza M."/>
            <person name="Hammon N."/>
            <person name="Hawkins T."/>
            <person name="Haydu L."/>
            <person name="Ho I."/>
            <person name="Huang W."/>
            <person name="Israni S."/>
            <person name="Jett J."/>
            <person name="Kadner K."/>
            <person name="Kimball H."/>
            <person name="Kobayashi A."/>
            <person name="Larionov V."/>
            <person name="Leem S.-H."/>
            <person name="Lopez F."/>
            <person name="Lou Y."/>
            <person name="Lowry S."/>
            <person name="Malfatti S."/>
            <person name="Martinez D."/>
            <person name="McCready P.M."/>
            <person name="Medina C."/>
            <person name="Morgan J."/>
            <person name="Nelson K."/>
            <person name="Nolan M."/>
            <person name="Ovcharenko I."/>
            <person name="Pitluck S."/>
            <person name="Pollard M."/>
            <person name="Popkie A.P."/>
            <person name="Predki P."/>
            <person name="Quan G."/>
            <person name="Ramirez L."/>
            <person name="Rash S."/>
            <person name="Retterer J."/>
            <person name="Rodriguez A."/>
            <person name="Rogers S."/>
            <person name="Salamov A."/>
            <person name="Salazar A."/>
            <person name="She X."/>
            <person name="Smith D."/>
            <person name="Slezak T."/>
            <person name="Solovyev V."/>
            <person name="Thayer N."/>
            <person name="Tice H."/>
            <person name="Tsai M."/>
            <person name="Ustaszewska A."/>
            <person name="Vo N."/>
            <person name="Wagner M."/>
            <person name="Wheeler J."/>
            <person name="Wu K."/>
            <person name="Xie G."/>
            <person name="Yang J."/>
            <person name="Dubchak I."/>
            <person name="Furey T.S."/>
            <person name="DeJong P."/>
            <person name="Dickson M."/>
            <person name="Gordon D."/>
            <person name="Eichler E.E."/>
            <person name="Pennacchio L.A."/>
            <person name="Richardson P."/>
            <person name="Stubbs L."/>
            <person name="Rokhsar D.S."/>
            <person name="Myers R.M."/>
            <person name="Rubin E.M."/>
            <person name="Lucas S.M."/>
        </authorList>
    </citation>
    <scope>NUCLEOTIDE SEQUENCE [LARGE SCALE GENOMIC DNA]</scope>
</reference>
<reference key="4">
    <citation type="submission" date="2005-07" db="EMBL/GenBank/DDBJ databases">
        <authorList>
            <person name="Mural R.J."/>
            <person name="Istrail S."/>
            <person name="Sutton G."/>
            <person name="Florea L."/>
            <person name="Halpern A.L."/>
            <person name="Mobarry C.M."/>
            <person name="Lippert R."/>
            <person name="Walenz B."/>
            <person name="Shatkay H."/>
            <person name="Dew I."/>
            <person name="Miller J.R."/>
            <person name="Flanigan M.J."/>
            <person name="Edwards N.J."/>
            <person name="Bolanos R."/>
            <person name="Fasulo D."/>
            <person name="Halldorsson B.V."/>
            <person name="Hannenhalli S."/>
            <person name="Turner R."/>
            <person name="Yooseph S."/>
            <person name="Lu F."/>
            <person name="Nusskern D.R."/>
            <person name="Shue B.C."/>
            <person name="Zheng X.H."/>
            <person name="Zhong F."/>
            <person name="Delcher A.L."/>
            <person name="Huson D.H."/>
            <person name="Kravitz S.A."/>
            <person name="Mouchard L."/>
            <person name="Reinert K."/>
            <person name="Remington K.A."/>
            <person name="Clark A.G."/>
            <person name="Waterman M.S."/>
            <person name="Eichler E.E."/>
            <person name="Adams M.D."/>
            <person name="Hunkapiller M.W."/>
            <person name="Myers E.W."/>
            <person name="Venter J.C."/>
        </authorList>
    </citation>
    <scope>NUCLEOTIDE SEQUENCE [LARGE SCALE GENOMIC DNA]</scope>
</reference>
<reference key="5">
    <citation type="journal article" date="2004" name="Genome Res.">
        <title>The status, quality, and expansion of the NIH full-length cDNA project: the Mammalian Gene Collection (MGC).</title>
        <authorList>
            <consortium name="The MGC Project Team"/>
        </authorList>
    </citation>
    <scope>NUCLEOTIDE SEQUENCE [LARGE SCALE MRNA]</scope>
    <source>
        <tissue>Brain</tissue>
        <tissue>Muscle</tissue>
        <tissue>Placenta</tissue>
        <tissue>Skin</tissue>
    </source>
</reference>
<reference key="6">
    <citation type="journal article" date="1996" name="Eur. J. Biochem.">
        <title>Characterization of the human small-ribosomal-subunit proteins by N-terminal and internal sequencing, and mass spectrometry.</title>
        <authorList>
            <person name="Vladimirov S.N."/>
            <person name="Ivanov A.V."/>
            <person name="Karpova G.G."/>
            <person name="Musolyamov A.K."/>
            <person name="Egorov T.A."/>
            <person name="Thiede B."/>
            <person name="Wittmann-Liebold B."/>
            <person name="Otto A."/>
        </authorList>
    </citation>
    <scope>PROTEIN SEQUENCE OF 2-19</scope>
    <source>
        <tissue>Placenta</tissue>
    </source>
</reference>
<reference key="7">
    <citation type="journal article" date="1998" name="Genome Res.">
        <title>A map of 75 human ribosomal protein genes.</title>
        <authorList>
            <person name="Kenmochi N."/>
            <person name="Kawaguchi T."/>
            <person name="Rozen S."/>
            <person name="Davis E."/>
            <person name="Goodman N."/>
            <person name="Hudson T.J."/>
            <person name="Tanaka T."/>
            <person name="Page D.C."/>
        </authorList>
    </citation>
    <scope>NUCLEOTIDE SEQUENCE [GENOMIC DNA] OF 10-73</scope>
</reference>
<reference key="8">
    <citation type="journal article" date="2003" name="Nature">
        <title>Proteomic characterization of the human centrosome by protein correlation profiling.</title>
        <authorList>
            <person name="Andersen J.S."/>
            <person name="Wilkinson C.J."/>
            <person name="Mayor T."/>
            <person name="Mortensen P."/>
            <person name="Nigg E.A."/>
            <person name="Mann M."/>
        </authorList>
    </citation>
    <scope>IDENTIFICATION BY MASS SPECTROMETRY</scope>
    <source>
        <tissue>Lymphoblast</tissue>
    </source>
</reference>
<reference key="9">
    <citation type="journal article" date="2007" name="Mol. Cell. Proteomics">
        <title>Molecular composition of IMP1 ribonucleoprotein granules.</title>
        <authorList>
            <person name="Joeson L."/>
            <person name="Vikesaa J."/>
            <person name="Krogh A."/>
            <person name="Nielsen L.K."/>
            <person name="Hansen T."/>
            <person name="Borup R."/>
            <person name="Johnsen A.H."/>
            <person name="Christiansen J."/>
            <person name="Nielsen F.C."/>
        </authorList>
    </citation>
    <scope>IDENTIFICATION IN A MRNP GRANULE COMPLEX</scope>
    <scope>IDENTIFICATION BY MASS SPECTROMETRY</scope>
    <scope>SUBCELLULAR LOCATION</scope>
</reference>
<reference key="10">
    <citation type="journal article" date="2008" name="Mol. Cell">
        <title>Kinase-selective enrichment enables quantitative phosphoproteomics of the kinome across the cell cycle.</title>
        <authorList>
            <person name="Daub H."/>
            <person name="Olsen J.V."/>
            <person name="Bairlein M."/>
            <person name="Gnad F."/>
            <person name="Oppermann F.S."/>
            <person name="Korner R."/>
            <person name="Greff Z."/>
            <person name="Keri G."/>
            <person name="Stemmann O."/>
            <person name="Mann M."/>
        </authorList>
    </citation>
    <scope>IDENTIFICATION BY MASS SPECTROMETRY [LARGE SCALE ANALYSIS]</scope>
    <source>
        <tissue>Cervix carcinoma</tissue>
    </source>
</reference>
<reference key="11">
    <citation type="journal article" date="2009" name="Science">
        <title>Lysine acetylation targets protein complexes and co-regulates major cellular functions.</title>
        <authorList>
            <person name="Choudhary C."/>
            <person name="Kumar C."/>
            <person name="Gnad F."/>
            <person name="Nielsen M.L."/>
            <person name="Rehman M."/>
            <person name="Walther T.C."/>
            <person name="Olsen J.V."/>
            <person name="Mann M."/>
        </authorList>
    </citation>
    <scope>ACETYLATION [LARGE SCALE ANALYSIS] AT LYS-155</scope>
    <scope>IDENTIFICATION BY MASS SPECTROMETRY [LARGE SCALE ANALYSIS]</scope>
</reference>
<reference key="12">
    <citation type="journal article" date="2011" name="BMC Syst. Biol.">
        <title>Initial characterization of the human central proteome.</title>
        <authorList>
            <person name="Burkard T.R."/>
            <person name="Planyavsky M."/>
            <person name="Kaupe I."/>
            <person name="Breitwieser F.P."/>
            <person name="Buerckstuemmer T."/>
            <person name="Bennett K.L."/>
            <person name="Superti-Furga G."/>
            <person name="Colinge J."/>
        </authorList>
    </citation>
    <scope>IDENTIFICATION BY MASS SPECTROMETRY [LARGE SCALE ANALYSIS]</scope>
</reference>
<reference key="13">
    <citation type="journal article" date="2013" name="J. Proteome Res.">
        <title>Toward a comprehensive characterization of a human cancer cell phosphoproteome.</title>
        <authorList>
            <person name="Zhou H."/>
            <person name="Di Palma S."/>
            <person name="Preisinger C."/>
            <person name="Peng M."/>
            <person name="Polat A.N."/>
            <person name="Heck A.J."/>
            <person name="Mohammed S."/>
        </authorList>
    </citation>
    <scope>PHOSPHORYLATION [LARGE SCALE ANALYSIS] AT SER-153 AND SER-163</scope>
    <scope>IDENTIFICATION BY MASS SPECTROMETRY [LARGE SCALE ANALYSIS]</scope>
    <source>
        <tissue>Cervix carcinoma</tissue>
        <tissue>Erythroleukemia</tissue>
    </source>
</reference>
<reference key="14">
    <citation type="journal article" date="2014" name="Curr. Opin. Struct. Biol.">
        <title>A new system for naming ribosomal proteins.</title>
        <authorList>
            <person name="Ban N."/>
            <person name="Beckmann R."/>
            <person name="Cate J.H.D."/>
            <person name="Dinman J.D."/>
            <person name="Dragon F."/>
            <person name="Ellis S.R."/>
            <person name="Lafontaine D.L.J."/>
            <person name="Lindahl L."/>
            <person name="Liljas A."/>
            <person name="Lipton J.M."/>
            <person name="McAlear M.A."/>
            <person name="Moore P.B."/>
            <person name="Noller H.F."/>
            <person name="Ortega J."/>
            <person name="Panse V.G."/>
            <person name="Ramakrishnan V."/>
            <person name="Spahn C.M.T."/>
            <person name="Steitz T.A."/>
            <person name="Tchorzewski M."/>
            <person name="Tollervey D."/>
            <person name="Warren A.J."/>
            <person name="Williamson J.R."/>
            <person name="Wilson D."/>
            <person name="Yonath A."/>
            <person name="Yusupov M."/>
        </authorList>
    </citation>
    <scope>NOMENCLATURE</scope>
</reference>
<reference key="15">
    <citation type="journal article" date="2014" name="J. Proteomics">
        <title>An enzyme assisted RP-RPLC approach for in-depth analysis of human liver phosphoproteome.</title>
        <authorList>
            <person name="Bian Y."/>
            <person name="Song C."/>
            <person name="Cheng K."/>
            <person name="Dong M."/>
            <person name="Wang F."/>
            <person name="Huang J."/>
            <person name="Sun D."/>
            <person name="Wang L."/>
            <person name="Ye M."/>
            <person name="Zou H."/>
        </authorList>
    </citation>
    <scope>IDENTIFICATION BY MASS SPECTROMETRY [LARGE SCALE ANALYSIS]</scope>
    <source>
        <tissue>Liver</tissue>
    </source>
</reference>
<reference key="16">
    <citation type="journal article" date="2015" name="Proteomics">
        <title>N-terminome analysis of the human mitochondrial proteome.</title>
        <authorList>
            <person name="Vaca Jacome A.S."/>
            <person name="Rabilloud T."/>
            <person name="Schaeffer-Reiss C."/>
            <person name="Rompais M."/>
            <person name="Ayoub D."/>
            <person name="Lane L."/>
            <person name="Bairoch A."/>
            <person name="Van Dorsselaer A."/>
            <person name="Carapito C."/>
        </authorList>
    </citation>
    <scope>IDENTIFICATION BY MASS SPECTROMETRY [LARGE SCALE ANALYSIS]</scope>
</reference>
<reference key="17">
    <citation type="journal article" date="2017" name="Nat. Struct. Mol. Biol.">
        <title>Site-specific mapping of the human SUMO proteome reveals co-modification with phosphorylation.</title>
        <authorList>
            <person name="Hendriks I.A."/>
            <person name="Lyon D."/>
            <person name="Young C."/>
            <person name="Jensen L.J."/>
            <person name="Vertegaal A.C."/>
            <person name="Nielsen M.L."/>
        </authorList>
    </citation>
    <scope>SUMOYLATION [LARGE SCALE ANALYSIS] AT LYS-93 AND LYS-139</scope>
    <scope>IDENTIFICATION BY MASS SPECTROMETRY [LARGE SCALE ANALYSIS]</scope>
</reference>
<reference key="18">
    <citation type="journal article" date="2013" name="Nature">
        <title>Structures of the human and Drosophila 80S ribosome.</title>
        <authorList>
            <person name="Anger A.M."/>
            <person name="Armache J.P."/>
            <person name="Berninghausen O."/>
            <person name="Habeck M."/>
            <person name="Subklewe M."/>
            <person name="Wilson D.N."/>
            <person name="Beckmann R."/>
        </authorList>
    </citation>
    <scope>STRUCTURE BY ELECTRON MICROSCOPY (5.0 ANGSTROMS) OF 80S RIBOSOME</scope>
    <scope>FUNCTION</scope>
    <scope>SUBUNIT</scope>
    <scope>SUBCELLULAR LOCATION</scope>
</reference>
<reference evidence="12 13 14" key="19">
    <citation type="journal article" date="2021" name="Science">
        <title>Nucleolar maturation of the human small subunit processome.</title>
        <authorList>
            <person name="Singh S."/>
            <person name="Vanden Broeck A."/>
            <person name="Miller L."/>
            <person name="Chaker-Margot M."/>
            <person name="Klinge S."/>
        </authorList>
    </citation>
    <scope>STRUCTURE BY ELECTRON MICROSCOPY (2.70 ANGSTROMS)</scope>
    <scope>FUNCTION</scope>
    <scope>SUBUNIT</scope>
    <scope>SUBCELLULAR LOCATION</scope>
</reference>
<reference key="20">
    <citation type="journal article" date="2006" name="Science">
        <title>The consensus coding sequences of human breast and colorectal cancers.</title>
        <authorList>
            <person name="Sjoeblom T."/>
            <person name="Jones S."/>
            <person name="Wood L.D."/>
            <person name="Parsons D.W."/>
            <person name="Lin J."/>
            <person name="Barber T.D."/>
            <person name="Mandelker D."/>
            <person name="Leary R.J."/>
            <person name="Ptak J."/>
            <person name="Silliman N."/>
            <person name="Szabo S."/>
            <person name="Buckhaults P."/>
            <person name="Farrell C."/>
            <person name="Meeh P."/>
            <person name="Markowitz S.D."/>
            <person name="Willis J."/>
            <person name="Dawson D."/>
            <person name="Willson J.K.V."/>
            <person name="Gazdar A.F."/>
            <person name="Hartigan J."/>
            <person name="Wu L."/>
            <person name="Liu C."/>
            <person name="Parmigiani G."/>
            <person name="Park B.H."/>
            <person name="Bachman K.E."/>
            <person name="Papadopoulos N."/>
            <person name="Vogelstein B."/>
            <person name="Kinzler K.W."/>
            <person name="Velculescu V.E."/>
        </authorList>
    </citation>
    <scope>VARIANT [LARGE SCALE ANALYSIS] PHE-137</scope>
</reference>
<organism>
    <name type="scientific">Homo sapiens</name>
    <name type="common">Human</name>
    <dbReference type="NCBI Taxonomy" id="9606"/>
    <lineage>
        <taxon>Eukaryota</taxon>
        <taxon>Metazoa</taxon>
        <taxon>Chordata</taxon>
        <taxon>Craniata</taxon>
        <taxon>Vertebrata</taxon>
        <taxon>Euteleostomi</taxon>
        <taxon>Mammalia</taxon>
        <taxon>Eutheria</taxon>
        <taxon>Euarchontoglires</taxon>
        <taxon>Primates</taxon>
        <taxon>Haplorrhini</taxon>
        <taxon>Catarrhini</taxon>
        <taxon>Hominidae</taxon>
        <taxon>Homo</taxon>
    </lineage>
</organism>
<keyword id="KW-0002">3D-structure</keyword>
<keyword id="KW-0007">Acetylation</keyword>
<keyword id="KW-0963">Cytoplasm</keyword>
<keyword id="KW-0903">Direct protein sequencing</keyword>
<keyword id="KW-1017">Isopeptide bond</keyword>
<keyword id="KW-0539">Nucleus</keyword>
<keyword id="KW-0597">Phosphoprotein</keyword>
<keyword id="KW-1267">Proteomics identification</keyword>
<keyword id="KW-1185">Reference proteome</keyword>
<keyword id="KW-0687">Ribonucleoprotein</keyword>
<keyword id="KW-0689">Ribosomal protein</keyword>
<keyword id="KW-0694">RNA-binding</keyword>
<keyword id="KW-0699">rRNA-binding</keyword>
<keyword id="KW-0832">Ubl conjugation</keyword>
<proteinExistence type="evidence at protein level"/>
<accession>P46781</accession>
<accession>A9C4C1</accession>
<accession>Q4QRK7</accession>
<accession>Q9BVZ0</accession>
<evidence type="ECO:0000250" key="1">
    <source>
        <dbReference type="UniProtKB" id="Q6ZWN5"/>
    </source>
</evidence>
<evidence type="ECO:0000255" key="2">
    <source>
        <dbReference type="PROSITE-ProRule" id="PRU00182"/>
    </source>
</evidence>
<evidence type="ECO:0000256" key="3">
    <source>
        <dbReference type="SAM" id="MobiDB-lite"/>
    </source>
</evidence>
<evidence type="ECO:0000269" key="4">
    <source>
    </source>
</evidence>
<evidence type="ECO:0000269" key="5">
    <source>
    </source>
</evidence>
<evidence type="ECO:0000269" key="6">
    <source>
    </source>
</evidence>
<evidence type="ECO:0000269" key="7">
    <source>
    </source>
</evidence>
<evidence type="ECO:0000269" key="8">
    <source>
    </source>
</evidence>
<evidence type="ECO:0000303" key="9">
    <source>
    </source>
</evidence>
<evidence type="ECO:0000305" key="10"/>
<evidence type="ECO:0000312" key="11">
    <source>
        <dbReference type="HGNC" id="HGNC:10442"/>
    </source>
</evidence>
<evidence type="ECO:0007744" key="12">
    <source>
        <dbReference type="PDB" id="7MQ8"/>
    </source>
</evidence>
<evidence type="ECO:0007744" key="13">
    <source>
        <dbReference type="PDB" id="7MQ9"/>
    </source>
</evidence>
<evidence type="ECO:0007744" key="14">
    <source>
        <dbReference type="PDB" id="7MQA"/>
    </source>
</evidence>
<evidence type="ECO:0007744" key="15">
    <source>
    </source>
</evidence>
<evidence type="ECO:0007744" key="16">
    <source>
    </source>
</evidence>
<evidence type="ECO:0007744" key="17">
    <source>
    </source>
</evidence>
<evidence type="ECO:0007829" key="18">
    <source>
        <dbReference type="PDB" id="6YBW"/>
    </source>
</evidence>
<evidence type="ECO:0007829" key="19">
    <source>
        <dbReference type="PDB" id="6ZLW"/>
    </source>
</evidence>
<evidence type="ECO:0007829" key="20">
    <source>
        <dbReference type="PDB" id="7R4X"/>
    </source>
</evidence>